<evidence type="ECO:0000255" key="1">
    <source>
        <dbReference type="HAMAP-Rule" id="MF_01588"/>
    </source>
</evidence>
<dbReference type="EC" id="6.5.1.2" evidence="1"/>
<dbReference type="EMBL" id="CP001087">
    <property type="protein sequence ID" value="ACN15899.1"/>
    <property type="molecule type" value="Genomic_DNA"/>
</dbReference>
<dbReference type="RefSeq" id="WP_015904662.1">
    <property type="nucleotide sequence ID" value="NC_012108.1"/>
</dbReference>
<dbReference type="SMR" id="C0QJ86"/>
<dbReference type="STRING" id="177437.HRM2_28100"/>
<dbReference type="KEGG" id="dat:HRM2_28100"/>
<dbReference type="eggNOG" id="COG0272">
    <property type="taxonomic scope" value="Bacteria"/>
</dbReference>
<dbReference type="HOGENOM" id="CLU_007764_2_1_7"/>
<dbReference type="OrthoDB" id="9759736at2"/>
<dbReference type="Proteomes" id="UP000000442">
    <property type="component" value="Chromosome"/>
</dbReference>
<dbReference type="GO" id="GO:0003677">
    <property type="term" value="F:DNA binding"/>
    <property type="evidence" value="ECO:0007669"/>
    <property type="project" value="InterPro"/>
</dbReference>
<dbReference type="GO" id="GO:0003911">
    <property type="term" value="F:DNA ligase (NAD+) activity"/>
    <property type="evidence" value="ECO:0007669"/>
    <property type="project" value="UniProtKB-UniRule"/>
</dbReference>
<dbReference type="GO" id="GO:0046872">
    <property type="term" value="F:metal ion binding"/>
    <property type="evidence" value="ECO:0007669"/>
    <property type="project" value="UniProtKB-KW"/>
</dbReference>
<dbReference type="GO" id="GO:0006281">
    <property type="term" value="P:DNA repair"/>
    <property type="evidence" value="ECO:0007669"/>
    <property type="project" value="UniProtKB-KW"/>
</dbReference>
<dbReference type="GO" id="GO:0006260">
    <property type="term" value="P:DNA replication"/>
    <property type="evidence" value="ECO:0007669"/>
    <property type="project" value="UniProtKB-KW"/>
</dbReference>
<dbReference type="CDD" id="cd17748">
    <property type="entry name" value="BRCT_DNA_ligase_like"/>
    <property type="match status" value="1"/>
</dbReference>
<dbReference type="CDD" id="cd00114">
    <property type="entry name" value="LIGANc"/>
    <property type="match status" value="1"/>
</dbReference>
<dbReference type="FunFam" id="1.10.150.20:FF:000006">
    <property type="entry name" value="DNA ligase"/>
    <property type="match status" value="1"/>
</dbReference>
<dbReference type="FunFam" id="1.10.150.20:FF:000007">
    <property type="entry name" value="DNA ligase"/>
    <property type="match status" value="1"/>
</dbReference>
<dbReference type="FunFam" id="2.40.50.140:FF:000012">
    <property type="entry name" value="DNA ligase"/>
    <property type="match status" value="1"/>
</dbReference>
<dbReference type="FunFam" id="3.30.470.30:FF:000001">
    <property type="entry name" value="DNA ligase"/>
    <property type="match status" value="1"/>
</dbReference>
<dbReference type="Gene3D" id="6.20.10.30">
    <property type="match status" value="1"/>
</dbReference>
<dbReference type="Gene3D" id="1.10.150.20">
    <property type="entry name" value="5' to 3' exonuclease, C-terminal subdomain"/>
    <property type="match status" value="2"/>
</dbReference>
<dbReference type="Gene3D" id="3.40.50.10190">
    <property type="entry name" value="BRCT domain"/>
    <property type="match status" value="1"/>
</dbReference>
<dbReference type="Gene3D" id="3.30.470.30">
    <property type="entry name" value="DNA ligase/mRNA capping enzyme"/>
    <property type="match status" value="1"/>
</dbReference>
<dbReference type="Gene3D" id="1.10.287.610">
    <property type="entry name" value="Helix hairpin bin"/>
    <property type="match status" value="1"/>
</dbReference>
<dbReference type="Gene3D" id="2.40.50.140">
    <property type="entry name" value="Nucleic acid-binding proteins"/>
    <property type="match status" value="1"/>
</dbReference>
<dbReference type="HAMAP" id="MF_01588">
    <property type="entry name" value="DNA_ligase_A"/>
    <property type="match status" value="1"/>
</dbReference>
<dbReference type="InterPro" id="IPR001357">
    <property type="entry name" value="BRCT_dom"/>
</dbReference>
<dbReference type="InterPro" id="IPR036420">
    <property type="entry name" value="BRCT_dom_sf"/>
</dbReference>
<dbReference type="InterPro" id="IPR041663">
    <property type="entry name" value="DisA/LigA_HHH"/>
</dbReference>
<dbReference type="InterPro" id="IPR001679">
    <property type="entry name" value="DNA_ligase"/>
</dbReference>
<dbReference type="InterPro" id="IPR033136">
    <property type="entry name" value="DNA_ligase_CS"/>
</dbReference>
<dbReference type="InterPro" id="IPR013839">
    <property type="entry name" value="DNAligase_adenylation"/>
</dbReference>
<dbReference type="InterPro" id="IPR013840">
    <property type="entry name" value="DNAligase_N"/>
</dbReference>
<dbReference type="InterPro" id="IPR003583">
    <property type="entry name" value="Hlx-hairpin-Hlx_DNA-bd_motif"/>
</dbReference>
<dbReference type="InterPro" id="IPR012340">
    <property type="entry name" value="NA-bd_OB-fold"/>
</dbReference>
<dbReference type="InterPro" id="IPR004150">
    <property type="entry name" value="NAD_DNA_ligase_OB"/>
</dbReference>
<dbReference type="InterPro" id="IPR010994">
    <property type="entry name" value="RuvA_2-like"/>
</dbReference>
<dbReference type="InterPro" id="IPR004149">
    <property type="entry name" value="Znf_DNAligase_C4"/>
</dbReference>
<dbReference type="NCBIfam" id="TIGR00575">
    <property type="entry name" value="dnlj"/>
    <property type="match status" value="1"/>
</dbReference>
<dbReference type="NCBIfam" id="NF005932">
    <property type="entry name" value="PRK07956.1"/>
    <property type="match status" value="1"/>
</dbReference>
<dbReference type="PANTHER" id="PTHR23389">
    <property type="entry name" value="CHROMOSOME TRANSMISSION FIDELITY FACTOR 18"/>
    <property type="match status" value="1"/>
</dbReference>
<dbReference type="PANTHER" id="PTHR23389:SF9">
    <property type="entry name" value="DNA LIGASE"/>
    <property type="match status" value="1"/>
</dbReference>
<dbReference type="Pfam" id="PF00533">
    <property type="entry name" value="BRCT"/>
    <property type="match status" value="1"/>
</dbReference>
<dbReference type="Pfam" id="PF01653">
    <property type="entry name" value="DNA_ligase_aden"/>
    <property type="match status" value="1"/>
</dbReference>
<dbReference type="Pfam" id="PF03120">
    <property type="entry name" value="DNA_ligase_OB"/>
    <property type="match status" value="1"/>
</dbReference>
<dbReference type="Pfam" id="PF03119">
    <property type="entry name" value="DNA_ligase_ZBD"/>
    <property type="match status" value="1"/>
</dbReference>
<dbReference type="Pfam" id="PF12826">
    <property type="entry name" value="HHH_2"/>
    <property type="match status" value="1"/>
</dbReference>
<dbReference type="Pfam" id="PF14520">
    <property type="entry name" value="HHH_5"/>
    <property type="match status" value="1"/>
</dbReference>
<dbReference type="Pfam" id="PF22745">
    <property type="entry name" value="Nlig-Ia"/>
    <property type="match status" value="1"/>
</dbReference>
<dbReference type="PIRSF" id="PIRSF001604">
    <property type="entry name" value="LigA"/>
    <property type="match status" value="1"/>
</dbReference>
<dbReference type="SMART" id="SM00292">
    <property type="entry name" value="BRCT"/>
    <property type="match status" value="1"/>
</dbReference>
<dbReference type="SMART" id="SM00278">
    <property type="entry name" value="HhH1"/>
    <property type="match status" value="2"/>
</dbReference>
<dbReference type="SMART" id="SM00532">
    <property type="entry name" value="LIGANc"/>
    <property type="match status" value="1"/>
</dbReference>
<dbReference type="SUPFAM" id="SSF52113">
    <property type="entry name" value="BRCT domain"/>
    <property type="match status" value="1"/>
</dbReference>
<dbReference type="SUPFAM" id="SSF56091">
    <property type="entry name" value="DNA ligase/mRNA capping enzyme, catalytic domain"/>
    <property type="match status" value="1"/>
</dbReference>
<dbReference type="SUPFAM" id="SSF50249">
    <property type="entry name" value="Nucleic acid-binding proteins"/>
    <property type="match status" value="1"/>
</dbReference>
<dbReference type="SUPFAM" id="SSF47781">
    <property type="entry name" value="RuvA domain 2-like"/>
    <property type="match status" value="1"/>
</dbReference>
<dbReference type="PROSITE" id="PS50172">
    <property type="entry name" value="BRCT"/>
    <property type="match status" value="1"/>
</dbReference>
<dbReference type="PROSITE" id="PS01056">
    <property type="entry name" value="DNA_LIGASE_N2"/>
    <property type="match status" value="1"/>
</dbReference>
<feature type="chain" id="PRO_0000380361" description="DNA ligase">
    <location>
        <begin position="1"/>
        <end position="685"/>
    </location>
</feature>
<feature type="domain" description="BRCT" evidence="1">
    <location>
        <begin position="606"/>
        <end position="685"/>
    </location>
</feature>
<feature type="active site" description="N6-AMP-lysine intermediate" evidence="1">
    <location>
        <position position="121"/>
    </location>
</feature>
<feature type="binding site" evidence="1">
    <location>
        <begin position="39"/>
        <end position="43"/>
    </location>
    <ligand>
        <name>NAD(+)</name>
        <dbReference type="ChEBI" id="CHEBI:57540"/>
    </ligand>
</feature>
<feature type="binding site" evidence="1">
    <location>
        <begin position="88"/>
        <end position="89"/>
    </location>
    <ligand>
        <name>NAD(+)</name>
        <dbReference type="ChEBI" id="CHEBI:57540"/>
    </ligand>
</feature>
<feature type="binding site" evidence="1">
    <location>
        <position position="119"/>
    </location>
    <ligand>
        <name>NAD(+)</name>
        <dbReference type="ChEBI" id="CHEBI:57540"/>
    </ligand>
</feature>
<feature type="binding site" evidence="1">
    <location>
        <position position="142"/>
    </location>
    <ligand>
        <name>NAD(+)</name>
        <dbReference type="ChEBI" id="CHEBI:57540"/>
    </ligand>
</feature>
<feature type="binding site" evidence="1">
    <location>
        <position position="182"/>
    </location>
    <ligand>
        <name>NAD(+)</name>
        <dbReference type="ChEBI" id="CHEBI:57540"/>
    </ligand>
</feature>
<feature type="binding site" evidence="1">
    <location>
        <position position="302"/>
    </location>
    <ligand>
        <name>NAD(+)</name>
        <dbReference type="ChEBI" id="CHEBI:57540"/>
    </ligand>
</feature>
<feature type="binding site" evidence="1">
    <location>
        <position position="326"/>
    </location>
    <ligand>
        <name>NAD(+)</name>
        <dbReference type="ChEBI" id="CHEBI:57540"/>
    </ligand>
</feature>
<feature type="binding site" evidence="1">
    <location>
        <position position="420"/>
    </location>
    <ligand>
        <name>Zn(2+)</name>
        <dbReference type="ChEBI" id="CHEBI:29105"/>
    </ligand>
</feature>
<feature type="binding site" evidence="1">
    <location>
        <position position="423"/>
    </location>
    <ligand>
        <name>Zn(2+)</name>
        <dbReference type="ChEBI" id="CHEBI:29105"/>
    </ligand>
</feature>
<feature type="binding site" evidence="1">
    <location>
        <position position="438"/>
    </location>
    <ligand>
        <name>Zn(2+)</name>
        <dbReference type="ChEBI" id="CHEBI:29105"/>
    </ligand>
</feature>
<feature type="binding site" evidence="1">
    <location>
        <position position="443"/>
    </location>
    <ligand>
        <name>Zn(2+)</name>
        <dbReference type="ChEBI" id="CHEBI:29105"/>
    </ligand>
</feature>
<accession>C0QJ86</accession>
<protein>
    <recommendedName>
        <fullName evidence="1">DNA ligase</fullName>
        <ecNumber evidence="1">6.5.1.2</ecNumber>
    </recommendedName>
    <alternativeName>
        <fullName evidence="1">Polydeoxyribonucleotide synthase [NAD(+)]</fullName>
    </alternativeName>
</protein>
<sequence>MIDPSSSFDRIKKEARLLREQLHVHNINYHVKDDPVISDGEYDRMMQRLIAIETQFPELSTPDSPTRRIGAKALTAFETAEHAIPMQSLDNAFSDQDVIDFHNRTAKILNTSDIRYTVEPKLDGVAVELRYEQGSLTLALTRGDGTMGEVITDNARTIPSVPLKLAPAGNGTIPDVLEVRGEVIINSKDFEGLNKKRLATGEPLFANPRNAAAGSLRQLDSRVTAKRPLEIFVYGVGRAQELMANFDIGSHSALLESLKRLGFRINPLIRSGLSLTEVLDRFKAFETMRQDLDYEIDGMVIKVDDIVFQERLGTKARSPRWAIAYKFPAMEETTVINDIIVQVGRTGTLTPVAILEPVNIGGVMVARASLHNQDEIQNKDIRINDTVLVKRAGDVIPKVVKPVTALRTGSERVFVMPTHCPVCHSPVRRLDNEAAVKCINASCKAQLKQRLKHFVSKGGFDMEGLGTKLIDQLVDRTLVGSFADLFTLDRETLAAMDRMGEKSATNIVQAIERSKRIPLKRFLFALGMAHTGESAAQLLSSTFFTLEALLKASAEALGAIEGVGPKTADSVVAFFANPDNQETIARMMENGVVIENHTVVESAALDNATFFSEKRVVLTGTLGTLTRSEAKQRLEEQGARVVSSVSKNTDILVAGEASGSKLVKARSLGVTIMDEQTFLEHLDRG</sequence>
<keyword id="KW-0227">DNA damage</keyword>
<keyword id="KW-0234">DNA repair</keyword>
<keyword id="KW-0235">DNA replication</keyword>
<keyword id="KW-0436">Ligase</keyword>
<keyword id="KW-0460">Magnesium</keyword>
<keyword id="KW-0464">Manganese</keyword>
<keyword id="KW-0479">Metal-binding</keyword>
<keyword id="KW-0520">NAD</keyword>
<keyword id="KW-1185">Reference proteome</keyword>
<keyword id="KW-0862">Zinc</keyword>
<reference key="1">
    <citation type="journal article" date="2009" name="Environ. Microbiol.">
        <title>Genome sequence of Desulfobacterium autotrophicum HRM2, a marine sulfate reducer oxidizing organic carbon completely to carbon dioxide.</title>
        <authorList>
            <person name="Strittmatter A.W."/>
            <person name="Liesegang H."/>
            <person name="Rabus R."/>
            <person name="Decker I."/>
            <person name="Amann J."/>
            <person name="Andres S."/>
            <person name="Henne A."/>
            <person name="Fricke W.F."/>
            <person name="Martinez-Arias R."/>
            <person name="Bartels D."/>
            <person name="Goesmann A."/>
            <person name="Krause L."/>
            <person name="Puehler A."/>
            <person name="Klenk H.P."/>
            <person name="Richter M."/>
            <person name="Schuler M."/>
            <person name="Gloeckner F.O."/>
            <person name="Meyerdierks A."/>
            <person name="Gottschalk G."/>
            <person name="Amann R."/>
        </authorList>
    </citation>
    <scope>NUCLEOTIDE SEQUENCE [LARGE SCALE GENOMIC DNA]</scope>
    <source>
        <strain>ATCC 43914 / DSM 3382 / VKM B-1955 / HRM2</strain>
    </source>
</reference>
<proteinExistence type="inferred from homology"/>
<name>DNLJ_DESAH</name>
<organism>
    <name type="scientific">Desulforapulum autotrophicum (strain ATCC 43914 / DSM 3382 / VKM B-1955 / HRM2)</name>
    <name type="common">Desulfobacterium autotrophicum</name>
    <dbReference type="NCBI Taxonomy" id="177437"/>
    <lineage>
        <taxon>Bacteria</taxon>
        <taxon>Pseudomonadati</taxon>
        <taxon>Thermodesulfobacteriota</taxon>
        <taxon>Desulfobacteria</taxon>
        <taxon>Desulfobacterales</taxon>
        <taxon>Desulfobacteraceae</taxon>
        <taxon>Desulforapulum</taxon>
    </lineage>
</organism>
<comment type="function">
    <text evidence="1">DNA ligase that catalyzes the formation of phosphodiester linkages between 5'-phosphoryl and 3'-hydroxyl groups in double-stranded DNA using NAD as a coenzyme and as the energy source for the reaction. It is essential for DNA replication and repair of damaged DNA.</text>
</comment>
<comment type="catalytic activity">
    <reaction evidence="1">
        <text>NAD(+) + (deoxyribonucleotide)n-3'-hydroxyl + 5'-phospho-(deoxyribonucleotide)m = (deoxyribonucleotide)n+m + AMP + beta-nicotinamide D-nucleotide.</text>
        <dbReference type="EC" id="6.5.1.2"/>
    </reaction>
</comment>
<comment type="cofactor">
    <cofactor evidence="1">
        <name>Mg(2+)</name>
        <dbReference type="ChEBI" id="CHEBI:18420"/>
    </cofactor>
    <cofactor evidence="1">
        <name>Mn(2+)</name>
        <dbReference type="ChEBI" id="CHEBI:29035"/>
    </cofactor>
</comment>
<comment type="similarity">
    <text evidence="1">Belongs to the NAD-dependent DNA ligase family. LigA subfamily.</text>
</comment>
<gene>
    <name evidence="1" type="primary">ligA</name>
    <name type="ordered locus">HRM2_28100</name>
</gene>